<name>YCAR_ECOSM</name>
<organism>
    <name type="scientific">Escherichia coli (strain SMS-3-5 / SECEC)</name>
    <dbReference type="NCBI Taxonomy" id="439855"/>
    <lineage>
        <taxon>Bacteria</taxon>
        <taxon>Pseudomonadati</taxon>
        <taxon>Pseudomonadota</taxon>
        <taxon>Gammaproteobacteria</taxon>
        <taxon>Enterobacterales</taxon>
        <taxon>Enterobacteriaceae</taxon>
        <taxon>Escherichia</taxon>
    </lineage>
</organism>
<protein>
    <recommendedName>
        <fullName evidence="1">UPF0434 protein YcaR</fullName>
    </recommendedName>
</protein>
<comment type="similarity">
    <text evidence="1">Belongs to the UPF0434 family.</text>
</comment>
<dbReference type="EMBL" id="CP000970">
    <property type="protein sequence ID" value="ACB15958.1"/>
    <property type="molecule type" value="Genomic_DNA"/>
</dbReference>
<dbReference type="RefSeq" id="WP_000350058.1">
    <property type="nucleotide sequence ID" value="NC_010498.1"/>
</dbReference>
<dbReference type="SMR" id="B1LJU6"/>
<dbReference type="GeneID" id="93776498"/>
<dbReference type="KEGG" id="ecm:EcSMS35_2203"/>
<dbReference type="HOGENOM" id="CLU_155659_3_1_6"/>
<dbReference type="Proteomes" id="UP000007011">
    <property type="component" value="Chromosome"/>
</dbReference>
<dbReference type="GO" id="GO:0005829">
    <property type="term" value="C:cytosol"/>
    <property type="evidence" value="ECO:0007669"/>
    <property type="project" value="TreeGrafter"/>
</dbReference>
<dbReference type="FunFam" id="2.20.25.10:FF:000002">
    <property type="entry name" value="UPF0434 protein YcaR"/>
    <property type="match status" value="1"/>
</dbReference>
<dbReference type="Gene3D" id="2.20.25.10">
    <property type="match status" value="1"/>
</dbReference>
<dbReference type="HAMAP" id="MF_01187">
    <property type="entry name" value="UPF0434"/>
    <property type="match status" value="1"/>
</dbReference>
<dbReference type="InterPro" id="IPR005651">
    <property type="entry name" value="Trm112-like"/>
</dbReference>
<dbReference type="NCBIfam" id="NF008806">
    <property type="entry name" value="PRK11827.1"/>
    <property type="match status" value="1"/>
</dbReference>
<dbReference type="PANTHER" id="PTHR33505:SF4">
    <property type="entry name" value="PROTEIN PREY, MITOCHONDRIAL"/>
    <property type="match status" value="1"/>
</dbReference>
<dbReference type="PANTHER" id="PTHR33505">
    <property type="entry name" value="ZGC:162634"/>
    <property type="match status" value="1"/>
</dbReference>
<dbReference type="Pfam" id="PF03966">
    <property type="entry name" value="Trm112p"/>
    <property type="match status" value="1"/>
</dbReference>
<dbReference type="SUPFAM" id="SSF158997">
    <property type="entry name" value="Trm112p-like"/>
    <property type="match status" value="1"/>
</dbReference>
<sequence length="60" mass="6855">MDHRLLEIIACPVCNGKLWYNQEKQELICKLDNLAFPLRDGIPVLLETEARVLTADESKS</sequence>
<reference key="1">
    <citation type="journal article" date="2008" name="J. Bacteriol.">
        <title>Insights into the environmental resistance gene pool from the genome sequence of the multidrug-resistant environmental isolate Escherichia coli SMS-3-5.</title>
        <authorList>
            <person name="Fricke W.F."/>
            <person name="Wright M.S."/>
            <person name="Lindell A.H."/>
            <person name="Harkins D.M."/>
            <person name="Baker-Austin C."/>
            <person name="Ravel J."/>
            <person name="Stepanauskas R."/>
        </authorList>
    </citation>
    <scope>NUCLEOTIDE SEQUENCE [LARGE SCALE GENOMIC DNA]</scope>
    <source>
        <strain>SMS-3-5 / SECEC</strain>
    </source>
</reference>
<feature type="chain" id="PRO_1000138309" description="UPF0434 protein YcaR">
    <location>
        <begin position="1"/>
        <end position="60"/>
    </location>
</feature>
<evidence type="ECO:0000255" key="1">
    <source>
        <dbReference type="HAMAP-Rule" id="MF_01187"/>
    </source>
</evidence>
<accession>B1LJU6</accession>
<gene>
    <name evidence="1" type="primary">ycaR</name>
    <name type="ordered locus">EcSMS35_2203</name>
</gene>
<proteinExistence type="inferred from homology"/>